<proteinExistence type="evidence at protein level"/>
<feature type="chain" id="PRO_0000144091" description="Nucleotide-binding oligomerization domain-containing protein 2">
    <location>
        <begin position="1"/>
        <end position="1020"/>
    </location>
</feature>
<feature type="domain" description="CARD 1" evidence="4">
    <location>
        <begin position="6"/>
        <end position="104"/>
    </location>
</feature>
<feature type="domain" description="CARD 2" evidence="4">
    <location>
        <begin position="106"/>
        <end position="200"/>
    </location>
</feature>
<feature type="domain" description="NACHT" evidence="5">
    <location>
        <begin position="273"/>
        <end position="600"/>
    </location>
</feature>
<feature type="repeat" description="LRR 1">
    <location>
        <begin position="685"/>
        <end position="709"/>
    </location>
</feature>
<feature type="repeat" description="LRR 2">
    <location>
        <begin position="726"/>
        <end position="749"/>
    </location>
</feature>
<feature type="repeat" description="LRR 3">
    <location>
        <begin position="766"/>
        <end position="792"/>
    </location>
</feature>
<feature type="repeat" description="LRR 4">
    <location>
        <begin position="794"/>
        <end position="817"/>
    </location>
</feature>
<feature type="repeat" description="LRR 5">
    <location>
        <begin position="822"/>
        <end position="845"/>
    </location>
</feature>
<feature type="repeat" description="LRR 6">
    <location>
        <begin position="850"/>
        <end position="873"/>
    </location>
</feature>
<feature type="repeat" description="LRR 7">
    <location>
        <begin position="906"/>
        <end position="929"/>
    </location>
</feature>
<feature type="repeat" description="LRR 8">
    <location>
        <begin position="934"/>
        <end position="962"/>
    </location>
</feature>
<feature type="repeat" description="LRR 9">
    <location>
        <begin position="963"/>
        <end position="985"/>
    </location>
</feature>
<feature type="repeat" description="LRR 10">
    <location>
        <begin position="1005"/>
        <end position="1019"/>
    </location>
</feature>
<feature type="region of interest" description="Required for CARD9 binding" evidence="2">
    <location>
        <begin position="221"/>
        <end position="254"/>
    </location>
</feature>
<feature type="short sequence motif" description="ATG16L1-binding motif" evidence="2">
    <location>
        <begin position="43"/>
        <end position="57"/>
    </location>
</feature>
<feature type="binding site" evidence="1">
    <location>
        <position position="219"/>
    </location>
    <ligand>
        <name>ADP</name>
        <dbReference type="ChEBI" id="CHEBI:456216"/>
    </ligand>
</feature>
<feature type="binding site" evidence="1">
    <location>
        <position position="232"/>
    </location>
    <ligand>
        <name>ADP</name>
        <dbReference type="ChEBI" id="CHEBI:456216"/>
    </ligand>
</feature>
<feature type="binding site" evidence="1">
    <location>
        <position position="233"/>
    </location>
    <ligand>
        <name>ADP</name>
        <dbReference type="ChEBI" id="CHEBI:456216"/>
    </ligand>
</feature>
<feature type="binding site" evidence="1">
    <location>
        <position position="282"/>
    </location>
    <ligand>
        <name>ADP</name>
        <dbReference type="ChEBI" id="CHEBI:456216"/>
    </ligand>
</feature>
<feature type="binding site" evidence="1">
    <location>
        <position position="283"/>
    </location>
    <ligand>
        <name>ADP</name>
        <dbReference type="ChEBI" id="CHEBI:456216"/>
    </ligand>
</feature>
<feature type="binding site" evidence="1">
    <location>
        <position position="284"/>
    </location>
    <ligand>
        <name>ADP</name>
        <dbReference type="ChEBI" id="CHEBI:456216"/>
    </ligand>
</feature>
<feature type="binding site" evidence="1">
    <location>
        <position position="285"/>
    </location>
    <ligand>
        <name>ADP</name>
        <dbReference type="ChEBI" id="CHEBI:456216"/>
    </ligand>
</feature>
<feature type="binding site" evidence="1">
    <location>
        <position position="286"/>
    </location>
    <ligand>
        <name>ADP</name>
        <dbReference type="ChEBI" id="CHEBI:456216"/>
    </ligand>
</feature>
<feature type="binding site" evidence="1">
    <location>
        <position position="287"/>
    </location>
    <ligand>
        <name>ADP</name>
        <dbReference type="ChEBI" id="CHEBI:456216"/>
    </ligand>
</feature>
<feature type="binding site" evidence="1">
    <location>
        <position position="583"/>
    </location>
    <ligand>
        <name>ADP</name>
        <dbReference type="ChEBI" id="CHEBI:456216"/>
    </ligand>
</feature>
<feature type="lipid moiety-binding region" description="S-palmitoyl cysteine" evidence="2">
    <location>
        <position position="375"/>
    </location>
</feature>
<feature type="splice variant" id="VSP_007069" description="In isoform 2." evidence="34">
    <location>
        <begin position="1"/>
        <end position="7"/>
    </location>
</feature>
<feature type="splice variant" id="VSP_007070" description="In isoform 2." evidence="34">
    <original>E</original>
    <variation>EGYSLCRSRCDRGFTLICLFCIL</variation>
    <location>
        <position position="195"/>
    </location>
</feature>
<feature type="sequence variant" description="In strain: NMRI." evidence="6">
    <original>T</original>
    <variation>A</variation>
    <location>
        <position position="212"/>
    </location>
</feature>
<feature type="sequence variant" description="In strain: NMRI." evidence="6">
    <original>Q</original>
    <variation>R</variation>
    <location>
        <position position="240"/>
    </location>
</feature>
<feature type="sequence variant" description="In strain: NMRI; requires 2 nucleotide substitutions." evidence="6">
    <original>L</original>
    <variation>C</variation>
    <location>
        <position position="422"/>
    </location>
</feature>
<feature type="sequence variant" description="In strain: NMRI." evidence="6">
    <original>G</original>
    <variation>V</variation>
    <location>
        <position position="485"/>
    </location>
</feature>
<feature type="sequence variant" description="In strain: NMRI." evidence="6">
    <original>V</original>
    <variation>A</variation>
    <location>
        <position position="603"/>
    </location>
</feature>
<feature type="sequence variant" description="In strain: NMRI." evidence="6">
    <original>V</original>
    <variation>I</variation>
    <location>
        <position position="675"/>
    </location>
</feature>
<feature type="sequence variant" description="In strain: NMRI." evidence="6">
    <original>E</original>
    <variation>Q</variation>
    <location>
        <position position="925"/>
    </location>
</feature>
<feature type="mutagenesis site" description="Mutation that mimics a human variant associated with Blau syndrome (BLAUS); knockin mice show impaired response to muramyl dipeptide." evidence="24">
    <original>R</original>
    <variation>Q</variation>
    <location>
        <position position="314"/>
    </location>
</feature>
<feature type="mutagenesis site" description="Mutation that mimics human L1007fsinsC variant; knockin mice show elevated NF-kappa-B activation in response to muramyl dipeptide and more efficient processing and secretion of the cytokine IL1B." evidence="8">
    <original>LSRNSAILEVWLRGNTFSLEEIQTLSSRDARLLL</original>
    <variation>P</variation>
    <location>
        <begin position="987"/>
        <end position="1020"/>
    </location>
</feature>
<accession>Q8K3Z0</accession>
<evidence type="ECO:0000250" key="1">
    <source>
        <dbReference type="UniProtKB" id="G1T469"/>
    </source>
</evidence>
<evidence type="ECO:0000250" key="2">
    <source>
        <dbReference type="UniProtKB" id="Q9HC29"/>
    </source>
</evidence>
<evidence type="ECO:0000250" key="3">
    <source>
        <dbReference type="UniProtKB" id="Q9Y239"/>
    </source>
</evidence>
<evidence type="ECO:0000255" key="4">
    <source>
        <dbReference type="PROSITE-ProRule" id="PRU00046"/>
    </source>
</evidence>
<evidence type="ECO:0000255" key="5">
    <source>
        <dbReference type="PROSITE-ProRule" id="PRU00136"/>
    </source>
</evidence>
<evidence type="ECO:0000269" key="6">
    <source>
    </source>
</evidence>
<evidence type="ECO:0000269" key="7">
    <source>
    </source>
</evidence>
<evidence type="ECO:0000269" key="8">
    <source>
    </source>
</evidence>
<evidence type="ECO:0000269" key="9">
    <source>
    </source>
</evidence>
<evidence type="ECO:0000269" key="10">
    <source>
    </source>
</evidence>
<evidence type="ECO:0000269" key="11">
    <source>
    </source>
</evidence>
<evidence type="ECO:0000269" key="12">
    <source>
    </source>
</evidence>
<evidence type="ECO:0000269" key="13">
    <source>
    </source>
</evidence>
<evidence type="ECO:0000269" key="14">
    <source>
    </source>
</evidence>
<evidence type="ECO:0000269" key="15">
    <source>
    </source>
</evidence>
<evidence type="ECO:0000269" key="16">
    <source>
    </source>
</evidence>
<evidence type="ECO:0000269" key="17">
    <source>
    </source>
</evidence>
<evidence type="ECO:0000269" key="18">
    <source>
    </source>
</evidence>
<evidence type="ECO:0000269" key="19">
    <source>
    </source>
</evidence>
<evidence type="ECO:0000269" key="20">
    <source>
    </source>
</evidence>
<evidence type="ECO:0000269" key="21">
    <source>
    </source>
</evidence>
<evidence type="ECO:0000269" key="22">
    <source>
    </source>
</evidence>
<evidence type="ECO:0000269" key="23">
    <source>
    </source>
</evidence>
<evidence type="ECO:0000269" key="24">
    <source>
    </source>
</evidence>
<evidence type="ECO:0000269" key="25">
    <source>
    </source>
</evidence>
<evidence type="ECO:0000269" key="26">
    <source>
    </source>
</evidence>
<evidence type="ECO:0000269" key="27">
    <source>
    </source>
</evidence>
<evidence type="ECO:0000269" key="28">
    <source>
    </source>
</evidence>
<evidence type="ECO:0000269" key="29">
    <source>
    </source>
</evidence>
<evidence type="ECO:0000269" key="30">
    <source>
    </source>
</evidence>
<evidence type="ECO:0000269" key="31">
    <source>
    </source>
</evidence>
<evidence type="ECO:0000269" key="32">
    <source>
    </source>
</evidence>
<evidence type="ECO:0000303" key="33">
    <source>
    </source>
</evidence>
<evidence type="ECO:0000303" key="34">
    <source>
    </source>
</evidence>
<evidence type="ECO:0000305" key="35"/>
<evidence type="ECO:0000312" key="36">
    <source>
        <dbReference type="MGI" id="MGI:2429397"/>
    </source>
</evidence>
<dbReference type="EMBL" id="AF520774">
    <property type="protein sequence ID" value="AAM76073.1"/>
    <property type="molecule type" value="mRNA"/>
</dbReference>
<dbReference type="EMBL" id="BC044774">
    <property type="protein sequence ID" value="AAH44774.1"/>
    <property type="status" value="ALT_INIT"/>
    <property type="molecule type" value="mRNA"/>
</dbReference>
<dbReference type="SMR" id="Q8K3Z0"/>
<dbReference type="CORUM" id="Q8K3Z0"/>
<dbReference type="DIP" id="DIP-46115N"/>
<dbReference type="FunCoup" id="Q8K3Z0">
    <property type="interactions" value="430"/>
</dbReference>
<dbReference type="IntAct" id="Q8K3Z0">
    <property type="interactions" value="4"/>
</dbReference>
<dbReference type="MINT" id="Q8K3Z0"/>
<dbReference type="STRING" id="10090.ENSMUSP00000113773"/>
<dbReference type="ChEMBL" id="CHEMBL5169176"/>
<dbReference type="PhosphoSitePlus" id="Q8K3Z0"/>
<dbReference type="PaxDb" id="10090-ENSMUSP00000050538"/>
<dbReference type="Antibodypedia" id="28302">
    <property type="antibodies" value="495 antibodies from 37 providers"/>
</dbReference>
<dbReference type="Ensembl" id="ENSMUST00000054324.15">
    <molecule id="Q8K3Z0-2"/>
    <property type="protein sequence ID" value="ENSMUSP00000050538.9"/>
    <property type="gene ID" value="ENSMUSG00000055994.16"/>
</dbReference>
<dbReference type="Ensembl" id="ENSMUST00000109634.3">
    <molecule id="Q8K3Z0-1"/>
    <property type="protein sequence ID" value="ENSMUSP00000105262.3"/>
    <property type="gene ID" value="ENSMUSG00000055994.16"/>
</dbReference>
<dbReference type="UCSC" id="uc009mrq.1">
    <molecule id="Q8K3Z0-1"/>
    <property type="organism name" value="mouse"/>
</dbReference>
<dbReference type="AGR" id="MGI:2429397"/>
<dbReference type="MGI" id="MGI:2429397">
    <property type="gene designation" value="Nod2"/>
</dbReference>
<dbReference type="VEuPathDB" id="HostDB:ENSMUSG00000055994"/>
<dbReference type="eggNOG" id="KOG4308">
    <property type="taxonomic scope" value="Eukaryota"/>
</dbReference>
<dbReference type="GeneTree" id="ENSGT00940000160934"/>
<dbReference type="InParanoid" id="Q8K3Z0"/>
<dbReference type="PhylomeDB" id="Q8K3Z0"/>
<dbReference type="TreeFam" id="TF352118"/>
<dbReference type="Reactome" id="R-MMU-168638">
    <property type="pathway name" value="NOD1/2 Signaling Pathway"/>
</dbReference>
<dbReference type="Reactome" id="R-MMU-450302">
    <property type="pathway name" value="activated TAK1 mediates p38 MAPK activation"/>
</dbReference>
<dbReference type="Reactome" id="R-MMU-450321">
    <property type="pathway name" value="JNK (c-Jun kinases) phosphorylation and activation mediated by activated human TAK1"/>
</dbReference>
<dbReference type="Reactome" id="R-MMU-5689896">
    <property type="pathway name" value="Ovarian tumor domain proteases"/>
</dbReference>
<dbReference type="PRO" id="PR:Q8K3Z0"/>
<dbReference type="Proteomes" id="UP000000589">
    <property type="component" value="Chromosome 8"/>
</dbReference>
<dbReference type="RNAct" id="Q8K3Z0">
    <property type="molecule type" value="protein"/>
</dbReference>
<dbReference type="Bgee" id="ENSMUSG00000055994">
    <property type="expression patterns" value="Expressed in granulocyte and 40 other cell types or tissues"/>
</dbReference>
<dbReference type="ExpressionAtlas" id="Q8K3Z0">
    <property type="expression patterns" value="baseline and differential"/>
</dbReference>
<dbReference type="GO" id="GO:0016323">
    <property type="term" value="C:basolateral plasma membrane"/>
    <property type="evidence" value="ECO:0007669"/>
    <property type="project" value="UniProtKB-SubCell"/>
</dbReference>
<dbReference type="GO" id="GO:0009986">
    <property type="term" value="C:cell surface"/>
    <property type="evidence" value="ECO:0000250"/>
    <property type="project" value="UniProtKB"/>
</dbReference>
<dbReference type="GO" id="GO:0005737">
    <property type="term" value="C:cytoplasm"/>
    <property type="evidence" value="ECO:0000250"/>
    <property type="project" value="UniProtKB"/>
</dbReference>
<dbReference type="GO" id="GO:0005856">
    <property type="term" value="C:cytoskeleton"/>
    <property type="evidence" value="ECO:0000250"/>
    <property type="project" value="UniProtKB"/>
</dbReference>
<dbReference type="GO" id="GO:0005829">
    <property type="term" value="C:cytosol"/>
    <property type="evidence" value="ECO:0000250"/>
    <property type="project" value="HGNC-UCL"/>
</dbReference>
<dbReference type="GO" id="GO:0019897">
    <property type="term" value="C:extrinsic component of plasma membrane"/>
    <property type="evidence" value="ECO:0000250"/>
    <property type="project" value="UniProtKB"/>
</dbReference>
<dbReference type="GO" id="GO:0005739">
    <property type="term" value="C:mitochondrion"/>
    <property type="evidence" value="ECO:0007669"/>
    <property type="project" value="UniProtKB-SubCell"/>
</dbReference>
<dbReference type="GO" id="GO:0005886">
    <property type="term" value="C:plasma membrane"/>
    <property type="evidence" value="ECO:0000250"/>
    <property type="project" value="HGNC-UCL"/>
</dbReference>
<dbReference type="GO" id="GO:0032991">
    <property type="term" value="C:protein-containing complex"/>
    <property type="evidence" value="ECO:0000250"/>
    <property type="project" value="UniProtKB"/>
</dbReference>
<dbReference type="GO" id="GO:0031982">
    <property type="term" value="C:vesicle"/>
    <property type="evidence" value="ECO:0000250"/>
    <property type="project" value="HGNC-UCL"/>
</dbReference>
<dbReference type="GO" id="GO:0043531">
    <property type="term" value="F:ADP binding"/>
    <property type="evidence" value="ECO:0000250"/>
    <property type="project" value="UniProtKB"/>
</dbReference>
<dbReference type="GO" id="GO:0005524">
    <property type="term" value="F:ATP binding"/>
    <property type="evidence" value="ECO:0007669"/>
    <property type="project" value="UniProtKB-KW"/>
</dbReference>
<dbReference type="GO" id="GO:0050700">
    <property type="term" value="F:CARD domain binding"/>
    <property type="evidence" value="ECO:0000250"/>
    <property type="project" value="HGNC-UCL"/>
</dbReference>
<dbReference type="GO" id="GO:0019899">
    <property type="term" value="F:enzyme binding"/>
    <property type="evidence" value="ECO:0000250"/>
    <property type="project" value="HGNC-UCL"/>
</dbReference>
<dbReference type="GO" id="GO:0032500">
    <property type="term" value="F:muramyl dipeptide binding"/>
    <property type="evidence" value="ECO:0000314"/>
    <property type="project" value="MGI"/>
</dbReference>
<dbReference type="GO" id="GO:0038187">
    <property type="term" value="F:pattern recognition receptor activity"/>
    <property type="evidence" value="ECO:0000314"/>
    <property type="project" value="UniProtKB"/>
</dbReference>
<dbReference type="GO" id="GO:0042834">
    <property type="term" value="F:peptidoglycan binding"/>
    <property type="evidence" value="ECO:0000250"/>
    <property type="project" value="HGNC-UCL"/>
</dbReference>
<dbReference type="GO" id="GO:0019901">
    <property type="term" value="F:protein kinase binding"/>
    <property type="evidence" value="ECO:0000250"/>
    <property type="project" value="HGNC-UCL"/>
</dbReference>
<dbReference type="GO" id="GO:0043130">
    <property type="term" value="F:ubiquitin binding"/>
    <property type="evidence" value="ECO:0000250"/>
    <property type="project" value="UniProtKB"/>
</dbReference>
<dbReference type="GO" id="GO:0002253">
    <property type="term" value="P:activation of immune response"/>
    <property type="evidence" value="ECO:0000315"/>
    <property type="project" value="MGI"/>
</dbReference>
<dbReference type="GO" id="GO:0002250">
    <property type="term" value="P:adaptive immune response"/>
    <property type="evidence" value="ECO:0007669"/>
    <property type="project" value="UniProtKB-KW"/>
</dbReference>
<dbReference type="GO" id="GO:0002815">
    <property type="term" value="P:biosynthetic process of antibacterial peptides active against Gram-positive bacteria"/>
    <property type="evidence" value="ECO:0000315"/>
    <property type="project" value="MGI"/>
</dbReference>
<dbReference type="GO" id="GO:0007249">
    <property type="term" value="P:canonical NF-kappaB signal transduction"/>
    <property type="evidence" value="ECO:0000250"/>
    <property type="project" value="HGNC-UCL"/>
</dbReference>
<dbReference type="GO" id="GO:0071222">
    <property type="term" value="P:cellular response to lipopolysaccharide"/>
    <property type="evidence" value="ECO:0000250"/>
    <property type="project" value="UniProtKB"/>
</dbReference>
<dbReference type="GO" id="GO:0071225">
    <property type="term" value="P:cellular response to muramyl dipeptide"/>
    <property type="evidence" value="ECO:0000250"/>
    <property type="project" value="UniProtKB"/>
</dbReference>
<dbReference type="GO" id="GO:0071224">
    <property type="term" value="P:cellular response to peptidoglycan"/>
    <property type="evidence" value="ECO:0000315"/>
    <property type="project" value="MGI"/>
</dbReference>
<dbReference type="GO" id="GO:0006952">
    <property type="term" value="P:defense response"/>
    <property type="evidence" value="ECO:0000304"/>
    <property type="project" value="HGNC-UCL"/>
</dbReference>
<dbReference type="GO" id="GO:0042742">
    <property type="term" value="P:defense response to bacterium"/>
    <property type="evidence" value="ECO:0000315"/>
    <property type="project" value="UniProtKB"/>
</dbReference>
<dbReference type="GO" id="GO:0050830">
    <property type="term" value="P:defense response to Gram-positive bacterium"/>
    <property type="evidence" value="ECO:0000315"/>
    <property type="project" value="MGI"/>
</dbReference>
<dbReference type="GO" id="GO:0016045">
    <property type="term" value="P:detection of bacterium"/>
    <property type="evidence" value="ECO:0000250"/>
    <property type="project" value="HGNC-UCL"/>
</dbReference>
<dbReference type="GO" id="GO:0009595">
    <property type="term" value="P:detection of biotic stimulus"/>
    <property type="evidence" value="ECO:0000304"/>
    <property type="project" value="HGNC-UCL"/>
</dbReference>
<dbReference type="GO" id="GO:0032498">
    <property type="term" value="P:detection of muramyl dipeptide"/>
    <property type="evidence" value="ECO:0000250"/>
    <property type="project" value="HGNC-UCL"/>
</dbReference>
<dbReference type="GO" id="GO:0070371">
    <property type="term" value="P:ERK1 and ERK2 cascade"/>
    <property type="evidence" value="ECO:0000314"/>
    <property type="project" value="MGI"/>
</dbReference>
<dbReference type="GO" id="GO:0051649">
    <property type="term" value="P:establishment of localization in cell"/>
    <property type="evidence" value="ECO:0000315"/>
    <property type="project" value="MGI"/>
</dbReference>
<dbReference type="GO" id="GO:0048874">
    <property type="term" value="P:host-mediated regulation of intestinal microbiota composition"/>
    <property type="evidence" value="ECO:0000315"/>
    <property type="project" value="UniProtKB"/>
</dbReference>
<dbReference type="GO" id="GO:0006954">
    <property type="term" value="P:inflammatory response"/>
    <property type="evidence" value="ECO:0000304"/>
    <property type="project" value="HGNC-UCL"/>
</dbReference>
<dbReference type="GO" id="GO:0045087">
    <property type="term" value="P:innate immune response"/>
    <property type="evidence" value="ECO:0000250"/>
    <property type="project" value="UniProtKB"/>
</dbReference>
<dbReference type="GO" id="GO:0002227">
    <property type="term" value="P:innate immune response in mucosa"/>
    <property type="evidence" value="ECO:0000315"/>
    <property type="project" value="MGI"/>
</dbReference>
<dbReference type="GO" id="GO:0036335">
    <property type="term" value="P:intestinal stem cell homeostasis"/>
    <property type="evidence" value="ECO:0000315"/>
    <property type="project" value="UniProtKB"/>
</dbReference>
<dbReference type="GO" id="GO:0035556">
    <property type="term" value="P:intracellular signal transduction"/>
    <property type="evidence" value="ECO:0000250"/>
    <property type="project" value="UniProtKB"/>
</dbReference>
<dbReference type="GO" id="GO:0007254">
    <property type="term" value="P:JNK cascade"/>
    <property type="evidence" value="ECO:0000314"/>
    <property type="project" value="MGI"/>
</dbReference>
<dbReference type="GO" id="GO:0000165">
    <property type="term" value="P:MAPK cascade"/>
    <property type="evidence" value="ECO:0000315"/>
    <property type="project" value="MGI"/>
</dbReference>
<dbReference type="GO" id="GO:0002862">
    <property type="term" value="P:negative regulation of inflammatory response to antigenic stimulus"/>
    <property type="evidence" value="ECO:0000315"/>
    <property type="project" value="MGI"/>
</dbReference>
<dbReference type="GO" id="GO:0032695">
    <property type="term" value="P:negative regulation of interleukin-12 production"/>
    <property type="evidence" value="ECO:0000314"/>
    <property type="project" value="MGI"/>
</dbReference>
<dbReference type="GO" id="GO:0032701">
    <property type="term" value="P:negative regulation of interleukin-18 production"/>
    <property type="evidence" value="ECO:0000315"/>
    <property type="project" value="MGI"/>
</dbReference>
<dbReference type="GO" id="GO:0032703">
    <property type="term" value="P:negative regulation of interleukin-2 production"/>
    <property type="evidence" value="ECO:0000315"/>
    <property type="project" value="MGI"/>
</dbReference>
<dbReference type="GO" id="GO:2000110">
    <property type="term" value="P:negative regulation of macrophage apoptotic process"/>
    <property type="evidence" value="ECO:0000314"/>
    <property type="project" value="BHF-UCL"/>
</dbReference>
<dbReference type="GO" id="GO:0010936">
    <property type="term" value="P:negative regulation of macrophage cytokine production"/>
    <property type="evidence" value="ECO:0000314"/>
    <property type="project" value="MGI"/>
</dbReference>
<dbReference type="GO" id="GO:0002710">
    <property type="term" value="P:negative regulation of T cell mediated immunity"/>
    <property type="evidence" value="ECO:0000315"/>
    <property type="project" value="MGI"/>
</dbReference>
<dbReference type="GO" id="GO:0034136">
    <property type="term" value="P:negative regulation of toll-like receptor 2 signaling pathway"/>
    <property type="evidence" value="ECO:0000315"/>
    <property type="project" value="MGI"/>
</dbReference>
<dbReference type="GO" id="GO:0032720">
    <property type="term" value="P:negative regulation of tumor necrosis factor production"/>
    <property type="evidence" value="ECO:0000315"/>
    <property type="project" value="MGI"/>
</dbReference>
<dbReference type="GO" id="GO:0032689">
    <property type="term" value="P:negative regulation of type II interferon production"/>
    <property type="evidence" value="ECO:0000315"/>
    <property type="project" value="MGI"/>
</dbReference>
<dbReference type="GO" id="GO:0070431">
    <property type="term" value="P:nucleotide-binding oligomerization domain containing 2 signaling pathway"/>
    <property type="evidence" value="ECO:0000314"/>
    <property type="project" value="UniProtKB"/>
</dbReference>
<dbReference type="GO" id="GO:0006909">
    <property type="term" value="P:phagocytosis"/>
    <property type="evidence" value="ECO:0000315"/>
    <property type="project" value="MGI"/>
</dbReference>
<dbReference type="GO" id="GO:0006963">
    <property type="term" value="P:positive regulation of antibacterial peptide biosynthetic process"/>
    <property type="evidence" value="ECO:0000314"/>
    <property type="project" value="MGI"/>
</dbReference>
<dbReference type="GO" id="GO:0010508">
    <property type="term" value="P:positive regulation of autophagy"/>
    <property type="evidence" value="ECO:0000314"/>
    <property type="project" value="UniProtKB"/>
</dbReference>
<dbReference type="GO" id="GO:0006965">
    <property type="term" value="P:positive regulation of biosynthetic process of antibacterial peptides active against Gram-positive bacteria"/>
    <property type="evidence" value="ECO:0000315"/>
    <property type="project" value="MGI"/>
</dbReference>
<dbReference type="GO" id="GO:0043123">
    <property type="term" value="P:positive regulation of canonical NF-kappaB signal transduction"/>
    <property type="evidence" value="ECO:0000314"/>
    <property type="project" value="UniProtKB"/>
</dbReference>
<dbReference type="GO" id="GO:0002720">
    <property type="term" value="P:positive regulation of cytokine production involved in immune response"/>
    <property type="evidence" value="ECO:0000250"/>
    <property type="project" value="UniProtKB"/>
</dbReference>
<dbReference type="GO" id="GO:0002606">
    <property type="term" value="P:positive regulation of dendritic cell antigen processing and presentation"/>
    <property type="evidence" value="ECO:0000315"/>
    <property type="project" value="BHF-UCL"/>
</dbReference>
<dbReference type="GO" id="GO:0050679">
    <property type="term" value="P:positive regulation of epithelial cell proliferation"/>
    <property type="evidence" value="ECO:0000315"/>
    <property type="project" value="BHF-UCL"/>
</dbReference>
<dbReference type="GO" id="GO:0070374">
    <property type="term" value="P:positive regulation of ERK1 and ERK2 cascade"/>
    <property type="evidence" value="ECO:0000314"/>
    <property type="project" value="BHF-UCL"/>
</dbReference>
<dbReference type="GO" id="GO:0002925">
    <property type="term" value="P:positive regulation of humoral immune response mediated by circulating immunoglobulin"/>
    <property type="evidence" value="ECO:0000315"/>
    <property type="project" value="MGI"/>
</dbReference>
<dbReference type="GO" id="GO:0045089">
    <property type="term" value="P:positive regulation of innate immune response"/>
    <property type="evidence" value="ECO:0000314"/>
    <property type="project" value="BHF-UCL"/>
</dbReference>
<dbReference type="GO" id="GO:0032731">
    <property type="term" value="P:positive regulation of interleukin-1 beta production"/>
    <property type="evidence" value="ECO:0000250"/>
    <property type="project" value="UniProtKB"/>
</dbReference>
<dbReference type="GO" id="GO:0032733">
    <property type="term" value="P:positive regulation of interleukin-10 production"/>
    <property type="evidence" value="ECO:0000315"/>
    <property type="project" value="BHF-UCL"/>
</dbReference>
<dbReference type="GO" id="GO:0032735">
    <property type="term" value="P:positive regulation of interleukin-12 production"/>
    <property type="evidence" value="ECO:0000314"/>
    <property type="project" value="MGI"/>
</dbReference>
<dbReference type="GO" id="GO:0032740">
    <property type="term" value="P:positive regulation of interleukin-17 production"/>
    <property type="evidence" value="ECO:0000250"/>
    <property type="project" value="UniProtKB"/>
</dbReference>
<dbReference type="GO" id="GO:0032755">
    <property type="term" value="P:positive regulation of interleukin-6 production"/>
    <property type="evidence" value="ECO:0000314"/>
    <property type="project" value="MGI"/>
</dbReference>
<dbReference type="GO" id="GO:0046330">
    <property type="term" value="P:positive regulation of JNK cascade"/>
    <property type="evidence" value="ECO:0000314"/>
    <property type="project" value="MGI"/>
</dbReference>
<dbReference type="GO" id="GO:0060907">
    <property type="term" value="P:positive regulation of macrophage cytokine production"/>
    <property type="evidence" value="ECO:0000314"/>
    <property type="project" value="MGI"/>
</dbReference>
<dbReference type="GO" id="GO:0043410">
    <property type="term" value="P:positive regulation of MAPK cascade"/>
    <property type="evidence" value="ECO:0000314"/>
    <property type="project" value="BHF-UCL"/>
</dbReference>
<dbReference type="GO" id="GO:1901526">
    <property type="term" value="P:positive regulation of mitophagy"/>
    <property type="evidence" value="ECO:0000315"/>
    <property type="project" value="UniProtKB"/>
</dbReference>
<dbReference type="GO" id="GO:0071639">
    <property type="term" value="P:positive regulation of monocyte chemotactic protein-1 production"/>
    <property type="evidence" value="ECO:0000315"/>
    <property type="project" value="UniProtKB"/>
</dbReference>
<dbReference type="GO" id="GO:1901224">
    <property type="term" value="P:positive regulation of non-canonical NF-kappaB signal transduction"/>
    <property type="evidence" value="ECO:0000315"/>
    <property type="project" value="MGI"/>
</dbReference>
<dbReference type="GO" id="GO:0045747">
    <property type="term" value="P:positive regulation of Notch signaling pathway"/>
    <property type="evidence" value="ECO:0000314"/>
    <property type="project" value="BHF-UCL"/>
</dbReference>
<dbReference type="GO" id="GO:0050766">
    <property type="term" value="P:positive regulation of phagocytosis"/>
    <property type="evidence" value="ECO:0000315"/>
    <property type="project" value="MGI"/>
</dbReference>
<dbReference type="GO" id="GO:0031398">
    <property type="term" value="P:positive regulation of protein ubiquitination"/>
    <property type="evidence" value="ECO:0000314"/>
    <property type="project" value="UniProtKB"/>
</dbReference>
<dbReference type="GO" id="GO:0032874">
    <property type="term" value="P:positive regulation of stress-activated MAPK cascade"/>
    <property type="evidence" value="ECO:0000314"/>
    <property type="project" value="MGI"/>
</dbReference>
<dbReference type="GO" id="GO:0045944">
    <property type="term" value="P:positive regulation of transcription by RNA polymerase II"/>
    <property type="evidence" value="ECO:0000250"/>
    <property type="project" value="UniProtKB"/>
</dbReference>
<dbReference type="GO" id="GO:0032760">
    <property type="term" value="P:positive regulation of tumor necrosis factor production"/>
    <property type="evidence" value="ECO:0000314"/>
    <property type="project" value="MGI"/>
</dbReference>
<dbReference type="GO" id="GO:0002830">
    <property type="term" value="P:positive regulation of type 2 immune response"/>
    <property type="evidence" value="ECO:0000250"/>
    <property type="project" value="BHF-UCL"/>
</dbReference>
<dbReference type="GO" id="GO:1904417">
    <property type="term" value="P:positive regulation of xenophagy"/>
    <property type="evidence" value="ECO:0000315"/>
    <property type="project" value="MGI"/>
</dbReference>
<dbReference type="GO" id="GO:0032098">
    <property type="term" value="P:regulation of appetite"/>
    <property type="evidence" value="ECO:0000315"/>
    <property type="project" value="UniProtKB"/>
</dbReference>
<dbReference type="GO" id="GO:0050727">
    <property type="term" value="P:regulation of inflammatory response"/>
    <property type="evidence" value="ECO:0000315"/>
    <property type="project" value="MGI"/>
</dbReference>
<dbReference type="GO" id="GO:0090022">
    <property type="term" value="P:regulation of neutrophil chemotaxis"/>
    <property type="evidence" value="ECO:0000315"/>
    <property type="project" value="MGI"/>
</dbReference>
<dbReference type="GO" id="GO:0034976">
    <property type="term" value="P:response to endoplasmic reticulum stress"/>
    <property type="evidence" value="ECO:0000314"/>
    <property type="project" value="UniProtKB"/>
</dbReference>
<dbReference type="GO" id="GO:0043330">
    <property type="term" value="P:response to exogenous dsRNA"/>
    <property type="evidence" value="ECO:0000315"/>
    <property type="project" value="MGI"/>
</dbReference>
<dbReference type="GO" id="GO:0032496">
    <property type="term" value="P:response to lipopolysaccharide"/>
    <property type="evidence" value="ECO:0000315"/>
    <property type="project" value="MGI"/>
</dbReference>
<dbReference type="GO" id="GO:0032495">
    <property type="term" value="P:response to muramyl dipeptide"/>
    <property type="evidence" value="ECO:0000314"/>
    <property type="project" value="UniProtKB"/>
</dbReference>
<dbReference type="GO" id="GO:0032494">
    <property type="term" value="P:response to peptidoglycan"/>
    <property type="evidence" value="ECO:0000314"/>
    <property type="project" value="MGI"/>
</dbReference>
<dbReference type="GO" id="GO:0007165">
    <property type="term" value="P:signal transduction"/>
    <property type="evidence" value="ECO:0000304"/>
    <property type="project" value="HGNC-UCL"/>
</dbReference>
<dbReference type="GO" id="GO:0051403">
    <property type="term" value="P:stress-activated MAPK cascade"/>
    <property type="evidence" value="ECO:0000314"/>
    <property type="project" value="MGI"/>
</dbReference>
<dbReference type="GO" id="GO:0001659">
    <property type="term" value="P:temperature homeostasis"/>
    <property type="evidence" value="ECO:0000315"/>
    <property type="project" value="UniProtKB"/>
</dbReference>
<dbReference type="GO" id="GO:0034134">
    <property type="term" value="P:toll-like receptor 2 signaling pathway"/>
    <property type="evidence" value="ECO:0000315"/>
    <property type="project" value="MGI"/>
</dbReference>
<dbReference type="GO" id="GO:0098792">
    <property type="term" value="P:xenophagy"/>
    <property type="evidence" value="ECO:0000315"/>
    <property type="project" value="MGI"/>
</dbReference>
<dbReference type="FunFam" id="3.80.10.10:FF:000239">
    <property type="entry name" value="Nucleotide-binding oligomerization domain-containing 2"/>
    <property type="match status" value="1"/>
</dbReference>
<dbReference type="FunFam" id="1.10.533.10:FF:000032">
    <property type="entry name" value="Nucleotide-binding oligomerization domain-containing protein 2"/>
    <property type="match status" value="1"/>
</dbReference>
<dbReference type="FunFam" id="1.10.533.10:FF:000045">
    <property type="entry name" value="Nucleotide-binding oligomerization domain-containing protein 2"/>
    <property type="match status" value="1"/>
</dbReference>
<dbReference type="FunFam" id="3.40.50.300:FF:000940">
    <property type="entry name" value="Nucleotide-binding oligomerization domain-containing protein 2"/>
    <property type="match status" value="1"/>
</dbReference>
<dbReference type="Gene3D" id="1.10.533.10">
    <property type="entry name" value="Death Domain, Fas"/>
    <property type="match status" value="2"/>
</dbReference>
<dbReference type="Gene3D" id="3.40.50.300">
    <property type="entry name" value="P-loop containing nucleotide triphosphate hydrolases"/>
    <property type="match status" value="1"/>
</dbReference>
<dbReference type="Gene3D" id="3.80.10.10">
    <property type="entry name" value="Ribonuclease Inhibitor"/>
    <property type="match status" value="1"/>
</dbReference>
<dbReference type="InterPro" id="IPR001315">
    <property type="entry name" value="CARD"/>
</dbReference>
<dbReference type="InterPro" id="IPR011029">
    <property type="entry name" value="DEATH-like_dom_sf"/>
</dbReference>
<dbReference type="InterPro" id="IPR018228">
    <property type="entry name" value="DNase_TatD-rel_CS"/>
</dbReference>
<dbReference type="InterPro" id="IPR001611">
    <property type="entry name" value="Leu-rich_rpt"/>
</dbReference>
<dbReference type="InterPro" id="IPR032675">
    <property type="entry name" value="LRR_dom_sf"/>
</dbReference>
<dbReference type="InterPro" id="IPR007111">
    <property type="entry name" value="NACHT_NTPase"/>
</dbReference>
<dbReference type="InterPro" id="IPR051261">
    <property type="entry name" value="NLR"/>
</dbReference>
<dbReference type="InterPro" id="IPR041267">
    <property type="entry name" value="NLRP_HD2"/>
</dbReference>
<dbReference type="InterPro" id="IPR041075">
    <property type="entry name" value="NOD1/2_WH"/>
</dbReference>
<dbReference type="InterPro" id="IPR027417">
    <property type="entry name" value="P-loop_NTPase"/>
</dbReference>
<dbReference type="PANTHER" id="PTHR24106">
    <property type="entry name" value="NACHT, LRR AND CARD DOMAINS-CONTAINING"/>
    <property type="match status" value="1"/>
</dbReference>
<dbReference type="Pfam" id="PF00619">
    <property type="entry name" value="CARD"/>
    <property type="match status" value="1"/>
</dbReference>
<dbReference type="Pfam" id="PF13516">
    <property type="entry name" value="LRR_6"/>
    <property type="match status" value="5"/>
</dbReference>
<dbReference type="Pfam" id="PF05729">
    <property type="entry name" value="NACHT"/>
    <property type="match status" value="1"/>
</dbReference>
<dbReference type="Pfam" id="PF17776">
    <property type="entry name" value="NLRC4_HD2"/>
    <property type="match status" value="1"/>
</dbReference>
<dbReference type="Pfam" id="PF17779">
    <property type="entry name" value="NOD2_WH"/>
    <property type="match status" value="1"/>
</dbReference>
<dbReference type="SMART" id="SM00368">
    <property type="entry name" value="LRR_RI"/>
    <property type="match status" value="8"/>
</dbReference>
<dbReference type="SUPFAM" id="SSF47986">
    <property type="entry name" value="DEATH domain"/>
    <property type="match status" value="2"/>
</dbReference>
<dbReference type="SUPFAM" id="SSF52540">
    <property type="entry name" value="P-loop containing nucleoside triphosphate hydrolases"/>
    <property type="match status" value="1"/>
</dbReference>
<dbReference type="SUPFAM" id="SSF52047">
    <property type="entry name" value="RNI-like"/>
    <property type="match status" value="1"/>
</dbReference>
<dbReference type="PROSITE" id="PS50209">
    <property type="entry name" value="CARD"/>
    <property type="match status" value="2"/>
</dbReference>
<dbReference type="PROSITE" id="PS50837">
    <property type="entry name" value="NACHT"/>
    <property type="match status" value="1"/>
</dbReference>
<reference key="1">
    <citation type="journal article" date="2003" name="Inflamm. Res.">
        <title>Cloning, sequencing and expression analysis of the mouse Nod2/Card15 gene.</title>
        <authorList>
            <person name="Iwanaga Y."/>
            <person name="Davey M.P."/>
            <person name="Martin T.M."/>
            <person name="Planck S.R."/>
            <person name="DePriest M.L."/>
            <person name="Baugh M.M."/>
            <person name="Suing C.M."/>
            <person name="Rosenbaum J.T."/>
        </authorList>
    </citation>
    <scope>NUCLEOTIDE SEQUENCE [MRNA] (ISOFORM 1)</scope>
    <source>
        <strain>BALB/cJ</strain>
        <tissue>Monocyte</tissue>
    </source>
</reference>
<reference key="2">
    <citation type="journal article" date="2004" name="Genome Res.">
        <title>The status, quality, and expansion of the NIH full-length cDNA project: the Mammalian Gene Collection (MGC).</title>
        <authorList>
            <consortium name="The MGC Project Team"/>
        </authorList>
    </citation>
    <scope>NUCLEOTIDE SEQUENCE [LARGE SCALE MRNA] (ISOFORM 2)</scope>
    <scope>VARIANTS ALA-212; ARG-240; CYS-422; VAL-485; ALA-603; ILE-675 AND GLN-925</scope>
    <source>
        <strain>NMRI</strain>
        <tissue>Mammary cancer</tissue>
    </source>
</reference>
<reference key="3">
    <citation type="journal article" date="2005" name="J. Biol. Chem.">
        <title>A role for Erbin in the regulation of Nod2-dependent NF-kappaB signaling.</title>
        <authorList>
            <person name="McDonald C."/>
            <person name="Chen F.F."/>
            <person name="Ollendorff V."/>
            <person name="Ogura Y."/>
            <person name="Marchetto S."/>
            <person name="Lecine P."/>
            <person name="Borg J.P."/>
            <person name="Nunez G."/>
        </authorList>
    </citation>
    <scope>INTERACTION WITH ERBIN</scope>
</reference>
<reference key="4">
    <citation type="journal article" date="2005" name="Science">
        <title>Nod2-dependent regulation of innate and adaptive immunity in the intestinal tract.</title>
        <authorList>
            <person name="Kobayashi K.S."/>
            <person name="Chamaillard M."/>
            <person name="Ogura Y."/>
            <person name="Henegariu O."/>
            <person name="Inohara N."/>
            <person name="Nunez G."/>
            <person name="Flavell R.A."/>
        </authorList>
    </citation>
    <scope>FUNCTION</scope>
    <scope>TISSUE SPECIFICITY</scope>
    <scope>DISRUPTION PHENOTYPE</scope>
</reference>
<reference key="5">
    <citation type="journal article" date="2005" name="Science">
        <title>Nod2 mutation in Crohn's disease potentiates NF-kappaB activity and IL-1beta processing.</title>
        <authorList>
            <person name="Maeda S."/>
            <person name="Hsu L.C."/>
            <person name="Liu H."/>
            <person name="Bankston L.A."/>
            <person name="Iimura M."/>
            <person name="Kagnoff M.F."/>
            <person name="Eckmann L."/>
            <person name="Karin M."/>
        </authorList>
    </citation>
    <scope>FUNCTION</scope>
    <scope>MUTAGENESIS OF 987-LEU--LEU-1020</scope>
</reference>
<reference key="6">
    <citation type="journal article" date="2007" name="Nat. Immunol.">
        <title>The adaptor protein CARD9 is required for innate immune responses to intracellular pathogens.</title>
        <authorList>
            <person name="Hsu Y.M."/>
            <person name="Zhang Y."/>
            <person name="You Y."/>
            <person name="Wang D."/>
            <person name="Li H."/>
            <person name="Duramad O."/>
            <person name="Qin X.F."/>
            <person name="Dong C."/>
            <person name="Lin X."/>
        </authorList>
    </citation>
    <scope>INTERACTION WITH CARD9</scope>
</reference>
<reference key="7">
    <citation type="journal article" date="2008" name="Proc. Natl. Acad. Sci. U.S.A.">
        <title>A NOD2-NALP1 complex mediates caspase-1-dependent IL-1beta secretion in response to Bacillus anthracis infection and muramyl dipeptide.</title>
        <authorList>
            <person name="Hsu L.C."/>
            <person name="Ali S.R."/>
            <person name="McGillivray S."/>
            <person name="Tseng P.H."/>
            <person name="Mariathasan S."/>
            <person name="Humke E.W."/>
            <person name="Eckmann L."/>
            <person name="Powell J.J."/>
            <person name="Nizet V."/>
            <person name="Dixit V.M."/>
            <person name="Karin M."/>
        </authorList>
    </citation>
    <scope>FUNCTION</scope>
    <scope>INTERACTION WITH CASP1</scope>
</reference>
<reference key="8">
    <citation type="journal article" date="2009" name="Proc. Natl. Acad. Sci. U.S.A.">
        <title>Nod2 is required for the regulation of commensal microbiota in the intestine.</title>
        <authorList>
            <person name="Petnicki-Ocwieja T."/>
            <person name="Hrncir T."/>
            <person name="Liu Y.J."/>
            <person name="Biswas A."/>
            <person name="Hudcovic T."/>
            <person name="Tlaskalova-Hogenova H."/>
            <person name="Kobayashi K.S."/>
        </authorList>
    </citation>
    <scope>DISRUPTION PHENOTYPE</scope>
    <scope>FUNCTION</scope>
</reference>
<reference key="9">
    <citation type="journal article" date="2010" name="Nat. Immunol.">
        <title>Nod1 and Nod2 direct autophagy by recruiting ATG16L1 to the plasma membrane at the site of bacterial entry.</title>
        <authorList>
            <person name="Travassos L.H."/>
            <person name="Carneiro L.A."/>
            <person name="Ramjeet M."/>
            <person name="Hussey S."/>
            <person name="Kim Y.G."/>
            <person name="Magalhaes J.G."/>
            <person name="Yuan L."/>
            <person name="Soares F."/>
            <person name="Chea E."/>
            <person name="Le Bourhis L."/>
            <person name="Boneca I.G."/>
            <person name="Allaoui A."/>
            <person name="Jones N.L."/>
            <person name="Nunez G."/>
            <person name="Girardin S.E."/>
            <person name="Philpott D.J."/>
        </authorList>
    </citation>
    <scope>FUNCTION</scope>
    <scope>INTERACTION WITH ATG16L1</scope>
</reference>
<reference key="10">
    <citation type="journal article" date="2010" name="Nat. Med.">
        <title>NOD2 stimulation induces autophagy in dendritic cells influencing bacterial handling and antigen presentation.</title>
        <authorList>
            <person name="Cooney R."/>
            <person name="Baker J."/>
            <person name="Brain O."/>
            <person name="Danis B."/>
            <person name="Pichulik T."/>
            <person name="Allan P."/>
            <person name="Ferguson D.J."/>
            <person name="Campbell B.J."/>
            <person name="Jewell D."/>
            <person name="Simmons A."/>
        </authorList>
    </citation>
    <scope>FUNCTION</scope>
    <scope>INTERACTION WITH ATG16L1</scope>
</reference>
<reference key="11">
    <citation type="journal article" date="2011" name="Diabetes">
        <title>NOD1 activators link innate immunity to insulin resistance.</title>
        <authorList>
            <person name="Schertzer J.D."/>
            <person name="Tamrakar A.K."/>
            <person name="Magalhaes J.G."/>
            <person name="Pereira S."/>
            <person name="Bilan P.J."/>
            <person name="Fullerton M.D."/>
            <person name="Liu Z."/>
            <person name="Steinberg G.R."/>
            <person name="Giacca A."/>
            <person name="Philpott D.J."/>
            <person name="Klip A."/>
        </authorList>
    </citation>
    <scope>DISRUPTION PHENOTYPE</scope>
    <scope>FUNCTION</scope>
</reference>
<reference key="12">
    <citation type="journal article" date="2011" name="Gut">
        <title>Nod2 is essential for temporal development of intestinal microbial communities.</title>
        <authorList>
            <person name="Rehman A."/>
            <person name="Sina C."/>
            <person name="Gavrilova O."/>
            <person name="Haesler R."/>
            <person name="Ott S."/>
            <person name="Baines J.F."/>
            <person name="Schreiber S."/>
            <person name="Rosenstiel P."/>
        </authorList>
    </citation>
    <scope>FUNCTION</scope>
    <scope>DISRUPTION PHENOTYPE</scope>
</reference>
<reference key="13">
    <citation type="journal article" date="2011" name="Proc. Natl. Acad. Sci. U.S.A.">
        <title>Nucleotide oligomerization domain-containing proteins instruct T cell helper type 2 immunity through stromal activation.</title>
        <authorList>
            <person name="Magalhaes J.G."/>
            <person name="Rubino S.J."/>
            <person name="Travassos L.H."/>
            <person name="Le Bourhis L."/>
            <person name="Duan W."/>
            <person name="Sellge G."/>
            <person name="Geddes K."/>
            <person name="Reardon C."/>
            <person name="Lechmann M."/>
            <person name="Carneiro L.A."/>
            <person name="Selvanantham T."/>
            <person name="Fritz J.H."/>
            <person name="Taylor B.C."/>
            <person name="Artis D."/>
            <person name="Mak T.W."/>
            <person name="Comeau M.R."/>
            <person name="Croft M."/>
            <person name="Girardin S.E."/>
            <person name="Philpott D.J."/>
        </authorList>
    </citation>
    <scope>FUNCTION</scope>
</reference>
<reference key="14">
    <citation type="journal article" date="2012" name="J. Biol. Chem.">
        <title>Proteasomal degradation of Nod2 protein mediates tolerance to bacterial cell wall components.</title>
        <authorList>
            <person name="Lee K.H."/>
            <person name="Biswas A."/>
            <person name="Liu Y.J."/>
            <person name="Kobayashi K.S."/>
        </authorList>
    </citation>
    <scope>INTERACTION WITH HSP90 AND SOCS3</scope>
</reference>
<reference key="15">
    <citation type="journal article" date="2012" name="Mol. Cell">
        <title>The ubiquitin ligase XIAP recruits LUBAC for NOD2 signaling in inflammation and innate immunity.</title>
        <authorList>
            <person name="Damgaard R.B."/>
            <person name="Nachbur U."/>
            <person name="Yabal M."/>
            <person name="Wong W.W."/>
            <person name="Fiil B.K."/>
            <person name="Kastirr M."/>
            <person name="Rieser E."/>
            <person name="Rickard J.A."/>
            <person name="Bankovacki A."/>
            <person name="Peschel C."/>
            <person name="Ruland J."/>
            <person name="Bekker-Jensen S."/>
            <person name="Mailand N."/>
            <person name="Kaufmann T."/>
            <person name="Strasser A."/>
            <person name="Walczak H."/>
            <person name="Silke J."/>
            <person name="Jost P.J."/>
            <person name="Gyrd-Hansen M."/>
        </authorList>
    </citation>
    <scope>FUNCTION</scope>
</reference>
<reference key="16">
    <citation type="journal article" date="2014" name="Immunity">
        <title>Bacterial sensor Nod2 prevents inflammation of the small intestine by restricting the expansion of the commensal Bacteroides vulgatus.</title>
        <authorList>
            <person name="Ramanan D."/>
            <person name="Tang M.S."/>
            <person name="Bowcutt R."/>
            <person name="Loke P."/>
            <person name="Cadwell K."/>
        </authorList>
    </citation>
    <scope>FUNCTION</scope>
    <scope>DISRUPTION PHENOTYPE</scope>
</reference>
<reference key="17">
    <citation type="journal article" date="2013" name="J. Clin. Invest.">
        <title>NOD2-mediated dysbiosis predisposes mice to transmissible colitis and colorectal cancer.</title>
        <authorList>
            <person name="Couturier-Maillard A."/>
            <person name="Secher T."/>
            <person name="Rehman A."/>
            <person name="Normand S."/>
            <person name="De Arcangelis A."/>
            <person name="Haesler R."/>
            <person name="Huot L."/>
            <person name="Grandjean T."/>
            <person name="Bressenot A."/>
            <person name="Delanoye-Crespin A."/>
            <person name="Gaillot O."/>
            <person name="Schreiber S."/>
            <person name="Lemoine Y."/>
            <person name="Ryffel B."/>
            <person name="Hot D."/>
            <person name="Nunez G."/>
            <person name="Chen G."/>
            <person name="Rosenstiel P."/>
            <person name="Chamaillard M."/>
        </authorList>
    </citation>
    <scope>FUNCTION</scope>
    <scope>DISRUPTION PHENOTYPE</scope>
</reference>
<reference key="18">
    <citation type="journal article" date="2013" name="J. Exp. Med.">
        <title>Recognition of gut microbiota by NOD2 is essential for the homeostasis of intestinal intraepithelial lymphocytes.</title>
        <authorList>
            <person name="Jiang W."/>
            <person name="Wang X."/>
            <person name="Zeng B."/>
            <person name="Liu L."/>
            <person name="Tardivel A."/>
            <person name="Wei H."/>
            <person name="Han J."/>
            <person name="MacDonald H.R."/>
            <person name="Tschopp J."/>
            <person name="Tian Z."/>
            <person name="Zhou R."/>
        </authorList>
    </citation>
    <scope>FUNCTION</scope>
    <scope>DISRUPTION PHENOTYPE</scope>
</reference>
<reference key="19">
    <citation type="journal article" date="2014" name="Cell Host Microbe">
        <title>The cytosolic bacterial peptidoglycan sensor Nod2 affords stem cell protection and links microbes to gut epithelial regeneration.</title>
        <authorList>
            <person name="Nigro G."/>
            <person name="Rossi R."/>
            <person name="Commere P.H."/>
            <person name="Jay P."/>
            <person name="Sansonetti P.J."/>
        </authorList>
    </citation>
    <scope>FUNCTION</scope>
    <scope>TISSUE SPECIFICITY</scope>
</reference>
<reference key="20">
    <citation type="journal article" date="2015" name="EMBO Mol. Med.">
        <title>Defective NOD2 peptidoglycan sensing promotes diet-induced inflammation, dysbiosis, and insulin resistance.</title>
        <authorList>
            <person name="Denou E."/>
            <person name="Lolmede K."/>
            <person name="Garidou L."/>
            <person name="Pomie C."/>
            <person name="Chabo C."/>
            <person name="Lau T.C."/>
            <person name="Fullerton M.D."/>
            <person name="Nigro G."/>
            <person name="Zakaroff-Girard A."/>
            <person name="Luche E."/>
            <person name="Garret C."/>
            <person name="Serino M."/>
            <person name="Amar J."/>
            <person name="Courtney M."/>
            <person name="Cavallari J.F."/>
            <person name="Henriksbo B.D."/>
            <person name="Barra N.G."/>
            <person name="Foley K.P."/>
            <person name="McPhee J.B."/>
            <person name="Duggan B.M."/>
            <person name="O'Neill H.M."/>
            <person name="Lee A.J."/>
            <person name="Sansonetti P."/>
            <person name="Ashkar A.A."/>
            <person name="Khan W.I."/>
            <person name="Surette M.G."/>
            <person name="Bouloumie A."/>
            <person name="Steinberg G.R."/>
            <person name="Burcelin R."/>
            <person name="Schertzer J.D."/>
        </authorList>
    </citation>
    <scope>FUNCTION</scope>
    <scope>DISRUPTION PHENOTYPE</scope>
    <scope>TISSUE SPECIFICITY</scope>
</reference>
<reference key="21">
    <citation type="journal article" date="2015" name="J. Immunol.">
        <title>Blau syndrome-associated Nod2 mutation alters expression of full-length NOD2 and limits responses to muramyl dipeptide in knock-in mice.</title>
        <authorList>
            <person name="Dugan J."/>
            <person name="Griffiths E."/>
            <person name="Snow P."/>
            <person name="Rosenzweig H."/>
            <person name="Lee E."/>
            <person name="Brown B."/>
            <person name="Carr D.W."/>
            <person name="Rose C."/>
            <person name="Rosenbaum J."/>
            <person name="Davey M.P."/>
        </authorList>
    </citation>
    <scope>MUTAGENESIS OF ARG-314</scope>
</reference>
<reference key="22">
    <citation type="journal article" date="2016" name="Nature">
        <title>NOD1 and NOD2 signalling links ER stress with inflammation.</title>
        <authorList>
            <person name="Keestra-Gounder A.M."/>
            <person name="Byndloss M.X."/>
            <person name="Seyffert N."/>
            <person name="Young B.M."/>
            <person name="Chavez-Arroyo A."/>
            <person name="Tsai A.Y."/>
            <person name="Cevallos S.A."/>
            <person name="Winter M.G."/>
            <person name="Pham O.H."/>
            <person name="Tiffany C.R."/>
            <person name="de Jong M.F."/>
            <person name="Kerrinnes T."/>
            <person name="Ravindran R."/>
            <person name="Luciw P.A."/>
            <person name="McSorley S.J."/>
            <person name="Baeumler A.J."/>
            <person name="Tsolis R.M."/>
        </authorList>
    </citation>
    <scope>FUNCTION</scope>
</reference>
<reference key="23">
    <citation type="journal article" date="2016" name="Science">
        <title>Gene-microbiota interactions contribute to the pathogenesis of inflammatory bowel disease.</title>
        <authorList>
            <person name="Chu H."/>
            <person name="Khosravi A."/>
            <person name="Kusumawardhani I.P."/>
            <person name="Kwon A.H."/>
            <person name="Vasconcelos A.C."/>
            <person name="Cunha L.D."/>
            <person name="Mayer A.E."/>
            <person name="Shen Y."/>
            <person name="Wu W.L."/>
            <person name="Kambal A."/>
            <person name="Targan S.R."/>
            <person name="Xavier R.J."/>
            <person name="Ernst P.B."/>
            <person name="Green D.R."/>
            <person name="McGovern D.P."/>
            <person name="Virgin H.W."/>
            <person name="Mazmanian S.K."/>
        </authorList>
    </citation>
    <scope>FUNCTION</scope>
</reference>
<reference key="24">
    <citation type="journal article" date="2017" name="Gut Pathog.">
        <title>Campylobacter jejuni infection of conventionally colonized mice lacking nucleotide-oligomerization-domain-2.</title>
        <authorList>
            <person name="Bereswill S."/>
            <person name="Grundmann U."/>
            <person name="Alutis M.E."/>
            <person name="Fischer A."/>
            <person name="Heimesaat M.M."/>
        </authorList>
    </citation>
    <scope>FUNCTION</scope>
</reference>
<reference key="25">
    <citation type="journal article" date="2020" name="Proc. Natl. Acad. Sci. U.S.A.">
        <title>Innate immune receptor NOD2 mediates LGR5+ intestinal stem cell protection against ROS cytotoxicity via mitophagy stimulation.</title>
        <authorList>
            <person name="Levy A."/>
            <person name="Stedman A."/>
            <person name="Deutsch E."/>
            <person name="Donnadieu F."/>
            <person name="Virgin H.W."/>
            <person name="Sansonetti P.J."/>
            <person name="Nigro G."/>
        </authorList>
    </citation>
    <scope>FUNCTION</scope>
    <scope>INTERACTION WITH ATG16L1</scope>
</reference>
<reference key="26">
    <citation type="journal article" date="2022" name="Nature">
        <title>Phosphorylation of muramyl peptides by NAGK is required for NOD2 activation.</title>
        <authorList>
            <person name="Stafford C.A."/>
            <person name="Gassauer A.M."/>
            <person name="de Oliveira Mann C.C."/>
            <person name="Tanzer M.C."/>
            <person name="Fessler E."/>
            <person name="Wefers B."/>
            <person name="Nagl D."/>
            <person name="Kuut G."/>
            <person name="Sulek K."/>
            <person name="Vasilopoulou C."/>
            <person name="Schwojer S.J."/>
            <person name="Wiest A."/>
            <person name="Pfautsch M.K."/>
            <person name="Wurst W."/>
            <person name="Yabal M."/>
            <person name="Froehlich T."/>
            <person name="Mann M."/>
            <person name="Gisch N."/>
            <person name="Jae L.T."/>
            <person name="Hornung V."/>
        </authorList>
    </citation>
    <scope>FUNCTION</scope>
</reference>
<reference key="27">
    <citation type="journal article" date="2022" name="Science">
        <title>Bacterial sensing via neuronal Nod2 regulates appetite and body temperature.</title>
        <authorList>
            <person name="Gabanyi I."/>
            <person name="Lepousez G."/>
            <person name="Wheeler R."/>
            <person name="Vieites-Prado A."/>
            <person name="Nissant A."/>
            <person name="Chevalier G."/>
            <person name="Wagner S."/>
            <person name="Moigneu C."/>
            <person name="Dulauroy S."/>
            <person name="Hicham S."/>
            <person name="Polomack B."/>
            <person name="Verny F."/>
            <person name="Rosenstiel P."/>
            <person name="Renier N."/>
            <person name="Boneca I.G."/>
            <person name="Eberl G."/>
            <person name="Lledo P.M."/>
        </authorList>
    </citation>
    <scope>FUNCTION</scope>
    <scope>DISRUPTION PHENOTYPE</scope>
    <scope>TISSUE SPECIFICITY</scope>
</reference>
<reference key="28">
    <citation type="journal article" date="2023" name="Science">
        <title>Microbe-mediated intestinal NOD2 stimulation improves linear growth of undernourished infant mice.</title>
        <authorList>
            <person name="Schwarzer M."/>
            <person name="Gautam U.K."/>
            <person name="Makki K."/>
            <person name="Lambert A."/>
            <person name="Brabec T."/>
            <person name="Joly A."/>
            <person name="Srutkova D."/>
            <person name="Poinsot P."/>
            <person name="Novotna T."/>
            <person name="Geoffroy S."/>
            <person name="Courtin P."/>
            <person name="Hermanova P.P."/>
            <person name="Matos R.C."/>
            <person name="Landry J.J.M."/>
            <person name="Gerard C."/>
            <person name="Bulteau A.L."/>
            <person name="Hudcovic T."/>
            <person name="Kozakova H."/>
            <person name="Filipp D."/>
            <person name="Chapot-Chartier M.P."/>
            <person name="Sinkora M."/>
            <person name="Peretti N."/>
            <person name="Boneca I.G."/>
            <person name="Chamaillard M."/>
            <person name="Vidal H."/>
            <person name="De Vadder F."/>
            <person name="Leulier F."/>
        </authorList>
    </citation>
    <scope>FUNCTION</scope>
</reference>
<name>NOD2_MOUSE</name>
<keyword id="KW-1064">Adaptive immunity</keyword>
<keyword id="KW-0025">Alternative splicing</keyword>
<keyword id="KW-0067">ATP-binding</keyword>
<keyword id="KW-0072">Autophagy</keyword>
<keyword id="KW-1003">Cell membrane</keyword>
<keyword id="KW-0963">Cytoplasm</keyword>
<keyword id="KW-0325">Glycoprotein</keyword>
<keyword id="KW-0391">Immunity</keyword>
<keyword id="KW-0399">Innate immunity</keyword>
<keyword id="KW-0433">Leucine-rich repeat</keyword>
<keyword id="KW-0449">Lipoprotein</keyword>
<keyword id="KW-0472">Membrane</keyword>
<keyword id="KW-0496">Mitochondrion</keyword>
<keyword id="KW-0547">Nucleotide-binding</keyword>
<keyword id="KW-0564">Palmitate</keyword>
<keyword id="KW-1185">Reference proteome</keyword>
<keyword id="KW-0677">Repeat</keyword>
<keyword id="KW-0832">Ubl conjugation</keyword>
<sequence>MRSSCCDMCSQEEFQAQRSQLVALLISGSLEGFESILDWLLSWDVLSREDYEGLSLPGQPLSHSARRLLDTVWNKGVWGCQKLLEAVQEAQANSHTFELYGSWDTHSLHPTRDLQSHRPAIVRRLYNHVEAMLELAREGGFLSQYECEEIRLPIFTSSQRARRLLDLAAVKANGLAAFLLQHVRELPAPLPLPYEAAECQKFISKLRTMVLTQSRFLSTYDGSENLCLEDIYTENILELQTEVGTAGALQKSPAILGLEDLFDTHGHLNRDADTILVVGEAGSGKSTLLQRLHLLWATGRSFQEFLFIFPFSCRQLQCVAKPLSLRTLLFEHCCWPDVAQDDVFQFLLDHPDRVLLTFDGLDEFKFRFTDRERHCSPIDPTSVQTLLFNLLQGNLLKNACKVLTSRPDAVSALLRKFVRTELQLKGFSEEGIQLYLRKHHREPGVADRLIQLIQATSALHGLCHLPVFSWMVSRCHRELLLQNRGFPTTSTDMYLLILQHFLLHASPPDSSPLGLGPGLLQSRLSTLLHLGHLALRGLAMSCYVFSAQQLQAAQVDSDDISLGFLVRAQSSVPGSKAPLEFLHITFQCFFAAFYLAVSADTSVASLKHLFSCGRLGSSLLGRLLPNLCIQGSRVKKGSEAALLQKAEPHNLQITAAFLAGLLSQQHRDLLAACQVSERVLLQRQARARSCLAHSLREHFHSIPPAVPGETKSMHAMPGFIWLIRSLYEMQEEQLAQEAVRRLDIGHLKLTFCRVGPAECAALAFVLQHLQRPVALQLDYNSVGDVGVEQLRPCLGVCTALYLRDNNISDRGARTLVECALRCEQLQKLALFNNKLTDACACSMAKLLAHKQNFLSLRVGNNHITAAGAEVLAQGLKSNTSLKFLGFWGNSVGDKGTQALAEVVADHQNLKWLSLVGNNIGSMGAEALALMLEKNKSLEELCLEENHICDEGVYSLAEGLKRNSTLKFLKLSNNGITYRGAEALLQALSRNSAILEVWLRGNTFSLEEIQTLSSRDARLLL</sequence>
<comment type="function">
    <text evidence="1 7 8 11 12 13 14 15 16 17 18 20 21 22 23 24 25 26 27 28 29 30 31 32">Pattern recognition receptor (PRR) that detects bacterial peptidoglycan fragments and other danger signals and plays an important role in gastrointestinal immunity (PubMed:15692051, PubMed:15692052, PubMed:19805227, PubMed:21715553). Specifically activated by muramyl dipeptide (MDP), a fragment of bacterial peptidoglycan found in every bacterial peptidoglycan type (PubMed:15692051, PubMed:15692052, PubMed:25429073). NOD2 specifically recognizes and binds 6-O-phospho-MDP, the phosphorylated form of MDP, which is generated by NAGK (PubMed:36002575). 6-O-phospho-MDP-binding triggers oligomerization that facilitates the binding and subsequent activation of the proximal adapter receptor-interacting RIPK2 (PubMed:15692051, PubMed:15692052, PubMed:22607974). Following recruitment, RIPK2 undergoes 'Met-1'- (linear) and 'Lys-63'-linked polyubiquitination by E3 ubiquitin-protein ligases XIAP, BIRC2, BIRC3 and the LUBAC complex, becoming a scaffolding protein for downstream effectors, triggering activation of the NF-kappa-B and MAP kinases signaling (PubMed:15692051, PubMed:15692052, PubMed:22607974). This in turn leads to the transcriptional activation of hundreds of genes involved in immune response (PubMed:22607974). Its ability to detect bacterial MDP plays a central role in maintaining the equilibrium between intestinal microbiota and host immune responses to control inflammation (PubMed:19805227, PubMed:21421666, PubMed:23281400, PubMed:24062413, PubMed:24882705, PubMed:25088769, PubMed:25666722, PubMed:28127403). An imbalance in this relationship results in dysbiosis, whereby pathogenic bacteria prevail on commensals, causing damage in the intestinal epithelial barrier as well as allowing bacterial invasion and inflammation (PubMed:23281400, PubMed:25088769). Acts as a regulator of appetite by sensing MDP in a subset of brain neurons: microbiota-derived MDP reach the brain, where they bind and activate NOD2 in inhibitory hypothalamic neurons, decreasing neuronal activity, thereby regulating satiety and body temperature (PubMed:35420957). NOD2-dependent MDP-sensing of bacterial cell walls in the intestinal epithelial compartment contributes to sustained postnatal growth upon undernutrition (PubMed:36821686). Also plays a role in antiviral response by acting as a sensor of single-stranded RNA (ssRNA) from viruses: upon ssRNA-binding, interacts with MAVS, leading to activation of interferon regulatory factor-3/IRF3 and expression of type I interferon (By similarity). Also acts as a regulator of autophagy in dendritic cells via its interaction with ATG16L1, possibly by recruiting ATG16L1 at the site of bacterial entry (PubMed:19898471, PubMed:19966812, PubMed:27230380). NOD2 activation in the small intestine crypt also contributes to intestinal stem cells survival and function: acts by promoting mitophagy via its association with ATG16L1 (PubMed:31919280). In addition to its main role in innate immunity, also regulates the adaptive immune system by acting as regulator of helper T-cell and regulatory T-cells (Tregs) (PubMed:21856952, PubMed:27230380). Besides recognizing pathogens, also involved in the endoplasmic reticulum stress response: acts by sensing and binding to the cytosolic metabolite sphingosine-1-phosphate generated in response to endoplasmic reticulum stress, initiating an inflammation process that leads to activation of the NF-kappa-B and MAP kinases signaling (PubMed:27007849). May also be involved in NLRP1 activation following activation by MDP, leading to CASP1 activation and IL1B release in macrophages (PubMed:18511561).</text>
</comment>
<comment type="activity regulation">
    <text evidence="1">ADP-binding promotes an inactive closed conformation.</text>
</comment>
<comment type="subunit">
    <text evidence="2 9 10 11 13 14 19 29">Homooligomer: homooligomerizes following muramyl dipeptide (MDP)-binding, promoting RIPK2 recruitment (By similarity). Interacts (via CARD domain) with RIPK2 (via CARD domain) (By similarity). Following RIPK2 recruitment, RIPK2 homooligomerizes via its CARD domain and forms long filaments named RIPosomes (By similarity). Interacts (via CARD domain) with ubiquitin; inhibiting interaction with RIPK2 (By similarity). Component of a signaling complex consisting of ARHGEF2, NOD2 and RIPK2 (By similarity). Interacts with ANKRD17 (via N-terminus) (By similarity). Interacts with HSPA1A; the interaction enhances NOD2 stability (By similarity). Interacts (via both CARD domains) with HSP90; the interaction enhances NOD2 stability (PubMed:23019338). Interacts (via CARD domain) with SOCS3; the interaction promotes NOD2 degradation (PubMed:23019338). Interacts (via CARD domain) with ERBIN; the interaction inhibits activation of NOD2 (PubMed:16203728). Interacts with MAPKBP1; the interaction is enhanced in the presence of muramyl dipeptide (MDP) and inhibits NOD2 homooligomerization and activation (By similarity). Interacts with INAVA; the interaction takes place upon Pattern recognition receptor (PRR) stimulation (By similarity). Interacts (via NACHT domain) with CARD9 (PubMed:17187069). Interacts (via CARD domain) with CASP1; this interaction leads to IL1B processing (PubMed:18511561). Also interacts with CASP4 (By similarity). Interacts with NLRP1; this interaction is enhanced in the presence of muramyl dipeptide (MDP) and leads to increased IL1B release (By similarity). Interacts with NLRP12; this interaction promotes degradation of NOD2 through the ubiquitin-proteasome pathway (By similarity). Interacts with ANKHD1, C10orf67, CHMP5, DOCK7, ENTR1, KRT15, LDOC1, PPP1R12C, PPP2R3B, TRIM41 and VIM (By similarity). Interacts with MAVS; interaction takes place following single-stranded RNA (ssRNA)-binding (By similarity). Interacts with ATG16L1 (PubMed:19898471, PubMed:19966812, PubMed:31919280). Interacts with Irgm1; promoting Irgm1 'Lys-63'-linked polyubiquitination, which is required for interactions with the core autophagy factors (By similarity).</text>
</comment>
<comment type="subcellular location">
    <subcellularLocation>
        <location evidence="2">Cell membrane</location>
        <topology evidence="2">Lipid-anchor</topology>
    </subcellularLocation>
    <subcellularLocation>
        <location evidence="2">Basolateral cell membrane</location>
    </subcellularLocation>
    <subcellularLocation>
        <location evidence="2">Cytoplasm</location>
    </subcellularLocation>
    <subcellularLocation>
        <location evidence="2">Mitochondrion</location>
    </subcellularLocation>
    <text evidence="2">Palmitoylation promotes localization to the cell membrane, where it detects bacterial invasion at the point of entry.</text>
</comment>
<comment type="alternative products">
    <event type="alternative splicing"/>
    <isoform>
        <id>Q8K3Z0-1</id>
        <name>1</name>
        <sequence type="displayed"/>
    </isoform>
    <isoform>
        <id>Q8K3Z0-2</id>
        <name>2</name>
        <sequence type="described" ref="VSP_007069 VSP_007070"/>
    </isoform>
</comment>
<comment type="tissue specificity">
    <text evidence="7 22 25 30">Expressed in monocytes, macrophages, dendritic cells, hepatocytes, preadipocytes, epithelial cells of oral cavity, lung and intestine (PubMed:25666722). In intestine, highly expressed in ileal Paneth cells of the crypt and in intestinal stem cells (PubMed:15692051, PubMed:24882705, PubMed:25666722). Also expressed in neurons of several brain regions including the hypothalamus (PubMed:35420957).</text>
</comment>
<comment type="domain">
    <text evidence="2">The ATG16L1-binding motif mediates interaction with ATG16L1.</text>
</comment>
<comment type="domain">
    <text evidence="2">Intramolecular interactions between the N-terminal moiety and the leucine-rich repeats (LRR) may be important for autoinhibition in the absence of activating signal.</text>
</comment>
<comment type="domain">
    <text evidence="2">The LRR repeats recognize and bind muramyl dipeptide (MDP).</text>
</comment>
<comment type="domain">
    <text evidence="2">The NACHT domain recognizes and binds sphingosine-1-phosphate in response to endoplasmic reticulum stress.</text>
</comment>
<comment type="PTM">
    <text evidence="2 3">Palmitoylated by ZDHHC5; palmitoylation is required for proper recruitment to the bacterial entry site and hence for proper signaling upon cognate peptidoglycan detection (By similarity). Palmitoylation promotes localization to the cell membrane (By similarity). Palmitoylation protects from SQSTM1/p62-dependent autophagic degradation (By similarity).</text>
</comment>
<comment type="PTM">
    <text evidence="2">Polyubiquitinated by TRIM27, leading to proteasome-mediated degradation (By similarity). Polyubiquitinated and degraded following muramyl dipeptide (MDP) stimulation, conferring MDP tolerance and preventing septic shock (By similarity).</text>
</comment>
<comment type="PTM">
    <text evidence="2">Degraded via selective autophagy following interaction with Irgm1. Irgm1 promotes NOD2-RIPK2 RIPosome recruitment to autophagosome membranes, promoting their SQSTM1/p62-dependent autophagic degradation.</text>
</comment>
<comment type="PTM">
    <text evidence="2">O-glycosylated by OGT, O-GlcNAcylation increases protein stability.</text>
</comment>
<comment type="disruption phenotype">
    <text evidence="7 12 15 16 20 21 23 25 30">No visible phenotype in absence of infection; mice are healthy and display normal lymphoid and myeloid cellular composition in the thymus and spleen (PubMed:15692051). Mice are however susceptible to bacterial infection due to the inability to detect bacterial muramyl dipeptide and trigger an innate immune response (PubMed:15692051). Deletion mice have an altered composition of the gut microbiota with a net increase in the abundance of bacteroidetes and firmicutes phyla in the feces and terminal ileum compared to wild-type mice due to the fact that they are unable to kill bacteria effectively (PubMed:19805227, PubMed:21421666). Mice show inflammation of the small intestine, due to an imbalance of the equilibrium between intestinal microbiota and host immune responses (PubMed:25088769). Dysbiosis caused by the absence of Nod2 predisposes mice to transmissible colitis and colorectal cancer (PubMed:23281400). Mice show increased bacterial adherence to the intestinal mucosa and bacterial infiltration in metabolic tissues, such as hepatic and adipose tissue, exacerbating inflammation and insulin resistance (PubMed:25666722). Mice show a reduced number of intestinal intraepithelial lymphocytes impairing the epithelium integrity and leading to altered immune response to the resident microbiota (PubMed:24062413). Conditional deletion in GABAergic neurons leads to metabolic alterations, characterized by a delay in achieving satiety and delayed temperature drops in response to fasting (PubMed:35420957). Mice lacking Nod1 and Nod2 are protected from high-fat diet-induced inflammation, lipid accumulation, and peripheral insulin intolerance (PubMed:21715553).</text>
</comment>
<comment type="similarity">
    <text evidence="35">Belongs to the NOD1-NOD2 family.</text>
</comment>
<comment type="sequence caution" evidence="35">
    <conflict type="erroneous initiation">
        <sequence resource="EMBL-CDS" id="AAH44774"/>
    </conflict>
    <text>Extended N-terminus.</text>
</comment>
<protein>
    <recommendedName>
        <fullName evidence="33">Nucleotide-binding oligomerization domain-containing protein 2</fullName>
    </recommendedName>
    <alternativeName>
        <fullName evidence="33">Caspase recruitment domain-containing protein 15</fullName>
    </alternativeName>
</protein>
<gene>
    <name evidence="33 36" type="primary">Nod2</name>
    <name evidence="33" type="synonym">Card15</name>
</gene>
<organism>
    <name type="scientific">Mus musculus</name>
    <name type="common">Mouse</name>
    <dbReference type="NCBI Taxonomy" id="10090"/>
    <lineage>
        <taxon>Eukaryota</taxon>
        <taxon>Metazoa</taxon>
        <taxon>Chordata</taxon>
        <taxon>Craniata</taxon>
        <taxon>Vertebrata</taxon>
        <taxon>Euteleostomi</taxon>
        <taxon>Mammalia</taxon>
        <taxon>Eutheria</taxon>
        <taxon>Euarchontoglires</taxon>
        <taxon>Glires</taxon>
        <taxon>Rodentia</taxon>
        <taxon>Myomorpha</taxon>
        <taxon>Muroidea</taxon>
        <taxon>Muridae</taxon>
        <taxon>Murinae</taxon>
        <taxon>Mus</taxon>
        <taxon>Mus</taxon>
    </lineage>
</organism>